<keyword id="KW-0030">Aminoacyl-tRNA synthetase</keyword>
<keyword id="KW-0067">ATP-binding</keyword>
<keyword id="KW-0963">Cytoplasm</keyword>
<keyword id="KW-0436">Ligase</keyword>
<keyword id="KW-0479">Metal-binding</keyword>
<keyword id="KW-0547">Nucleotide-binding</keyword>
<keyword id="KW-0648">Protein biosynthesis</keyword>
<keyword id="KW-1185">Reference proteome</keyword>
<keyword id="KW-0862">Zinc</keyword>
<dbReference type="EC" id="6.1.1.10" evidence="1"/>
<dbReference type="EMBL" id="BA000030">
    <property type="protein sequence ID" value="BAC72115.1"/>
    <property type="molecule type" value="Genomic_DNA"/>
</dbReference>
<dbReference type="RefSeq" id="WP_010985828.1">
    <property type="nucleotide sequence ID" value="NZ_JZJK01000079.1"/>
</dbReference>
<dbReference type="SMR" id="Q82F60"/>
<dbReference type="GeneID" id="41541485"/>
<dbReference type="KEGG" id="sma:SAVERM_4403"/>
<dbReference type="eggNOG" id="COG0143">
    <property type="taxonomic scope" value="Bacteria"/>
</dbReference>
<dbReference type="HOGENOM" id="CLU_009710_1_2_11"/>
<dbReference type="OrthoDB" id="9810191at2"/>
<dbReference type="Proteomes" id="UP000000428">
    <property type="component" value="Chromosome"/>
</dbReference>
<dbReference type="GO" id="GO:0017101">
    <property type="term" value="C:aminoacyl-tRNA synthetase multienzyme complex"/>
    <property type="evidence" value="ECO:0007669"/>
    <property type="project" value="TreeGrafter"/>
</dbReference>
<dbReference type="GO" id="GO:0005829">
    <property type="term" value="C:cytosol"/>
    <property type="evidence" value="ECO:0007669"/>
    <property type="project" value="TreeGrafter"/>
</dbReference>
<dbReference type="GO" id="GO:0005524">
    <property type="term" value="F:ATP binding"/>
    <property type="evidence" value="ECO:0007669"/>
    <property type="project" value="UniProtKB-UniRule"/>
</dbReference>
<dbReference type="GO" id="GO:0046872">
    <property type="term" value="F:metal ion binding"/>
    <property type="evidence" value="ECO:0007669"/>
    <property type="project" value="UniProtKB-KW"/>
</dbReference>
<dbReference type="GO" id="GO:0004825">
    <property type="term" value="F:methionine-tRNA ligase activity"/>
    <property type="evidence" value="ECO:0007669"/>
    <property type="project" value="UniProtKB-UniRule"/>
</dbReference>
<dbReference type="GO" id="GO:0006431">
    <property type="term" value="P:methionyl-tRNA aminoacylation"/>
    <property type="evidence" value="ECO:0007669"/>
    <property type="project" value="UniProtKB-UniRule"/>
</dbReference>
<dbReference type="CDD" id="cd07957">
    <property type="entry name" value="Anticodon_Ia_Met"/>
    <property type="match status" value="1"/>
</dbReference>
<dbReference type="CDD" id="cd00814">
    <property type="entry name" value="MetRS_core"/>
    <property type="match status" value="1"/>
</dbReference>
<dbReference type="FunFam" id="2.20.28.20:FF:000001">
    <property type="entry name" value="Methionine--tRNA ligase"/>
    <property type="match status" value="1"/>
</dbReference>
<dbReference type="Gene3D" id="3.40.50.620">
    <property type="entry name" value="HUPs"/>
    <property type="match status" value="1"/>
</dbReference>
<dbReference type="Gene3D" id="1.10.730.10">
    <property type="entry name" value="Isoleucyl-tRNA Synthetase, Domain 1"/>
    <property type="match status" value="1"/>
</dbReference>
<dbReference type="Gene3D" id="2.20.28.20">
    <property type="entry name" value="Methionyl-tRNA synthetase, Zn-domain"/>
    <property type="match status" value="1"/>
</dbReference>
<dbReference type="HAMAP" id="MF_00098">
    <property type="entry name" value="Met_tRNA_synth_type1"/>
    <property type="match status" value="1"/>
</dbReference>
<dbReference type="InterPro" id="IPR041872">
    <property type="entry name" value="Anticodon_Met"/>
</dbReference>
<dbReference type="InterPro" id="IPR023458">
    <property type="entry name" value="Met-tRNA_ligase_1"/>
</dbReference>
<dbReference type="InterPro" id="IPR014758">
    <property type="entry name" value="Met-tRNA_synth"/>
</dbReference>
<dbReference type="InterPro" id="IPR015413">
    <property type="entry name" value="Methionyl/Leucyl_tRNA_Synth"/>
</dbReference>
<dbReference type="InterPro" id="IPR033911">
    <property type="entry name" value="MetRS_core"/>
</dbReference>
<dbReference type="InterPro" id="IPR029038">
    <property type="entry name" value="MetRS_Zn"/>
</dbReference>
<dbReference type="InterPro" id="IPR014729">
    <property type="entry name" value="Rossmann-like_a/b/a_fold"/>
</dbReference>
<dbReference type="InterPro" id="IPR009080">
    <property type="entry name" value="tRNAsynth_Ia_anticodon-bd"/>
</dbReference>
<dbReference type="NCBIfam" id="TIGR00398">
    <property type="entry name" value="metG"/>
    <property type="match status" value="1"/>
</dbReference>
<dbReference type="PANTHER" id="PTHR45765">
    <property type="entry name" value="METHIONINE--TRNA LIGASE"/>
    <property type="match status" value="1"/>
</dbReference>
<dbReference type="PANTHER" id="PTHR45765:SF1">
    <property type="entry name" value="METHIONINE--TRNA LIGASE, CYTOPLASMIC"/>
    <property type="match status" value="1"/>
</dbReference>
<dbReference type="Pfam" id="PF19303">
    <property type="entry name" value="Anticodon_3"/>
    <property type="match status" value="1"/>
</dbReference>
<dbReference type="Pfam" id="PF09334">
    <property type="entry name" value="tRNA-synt_1g"/>
    <property type="match status" value="1"/>
</dbReference>
<dbReference type="PRINTS" id="PR01041">
    <property type="entry name" value="TRNASYNTHMET"/>
</dbReference>
<dbReference type="SUPFAM" id="SSF47323">
    <property type="entry name" value="Anticodon-binding domain of a subclass of class I aminoacyl-tRNA synthetases"/>
    <property type="match status" value="1"/>
</dbReference>
<dbReference type="SUPFAM" id="SSF57770">
    <property type="entry name" value="Methionyl-tRNA synthetase (MetRS), Zn-domain"/>
    <property type="match status" value="1"/>
</dbReference>
<dbReference type="SUPFAM" id="SSF52374">
    <property type="entry name" value="Nucleotidylyl transferase"/>
    <property type="match status" value="1"/>
</dbReference>
<sequence>MARHLITSALPYINGIKHLGNMVGSMLPADVYSRYLRQRGHDVLYICATDEHGTPAELAAKERGLPVDEFCAQAHDAQKAVYDGFELAFDYFGRSSSEQNREITQHFARRLNENGFIEERAIRQVYSPADGRFLPDRYVEGTCPHCGYDKARGDQCENCTRVLDPTDLINPRSAISGSTDLEVRETKHLFLLQSKLQHEVEEWVARHEEEWPQLASSIARKWLNEGLHDRAITRDLDWGVPVPADTWPELAAEGKVFYVWFDAPIEYIGATKEWSDLDPENRDWKSWWYDADSGENPVRYTEFMAKDNVPFHTVMFPATELGVREPWKKVDYVKAFNWLTYYGGKFSTSQKRGVFTDHALEILPADYWRYFLIANAPESDDSSFTWEHFTATVNKDLADTLGNFVNRVLSFSKKRFGEEVPAGAPAGESETKLGEEIAALLAEYESHMETLQFRKAAAALRALWSAGNSYLEEKAPWLEIKTNPEGAALTLRTAMNLIHLYSVVSEPFIPASSKAMRSAFALSEDTATWVTQDEAKSLDSVPAGTPFTVPPVLFAKITDEDLESYKERFGGAPE</sequence>
<evidence type="ECO:0000255" key="1">
    <source>
        <dbReference type="HAMAP-Rule" id="MF_00098"/>
    </source>
</evidence>
<proteinExistence type="inferred from homology"/>
<reference key="1">
    <citation type="journal article" date="2001" name="Proc. Natl. Acad. Sci. U.S.A.">
        <title>Genome sequence of an industrial microorganism Streptomyces avermitilis: deducing the ability of producing secondary metabolites.</title>
        <authorList>
            <person name="Omura S."/>
            <person name="Ikeda H."/>
            <person name="Ishikawa J."/>
            <person name="Hanamoto A."/>
            <person name="Takahashi C."/>
            <person name="Shinose M."/>
            <person name="Takahashi Y."/>
            <person name="Horikawa H."/>
            <person name="Nakazawa H."/>
            <person name="Osonoe T."/>
            <person name="Kikuchi H."/>
            <person name="Shiba T."/>
            <person name="Sakaki Y."/>
            <person name="Hattori M."/>
        </authorList>
    </citation>
    <scope>NUCLEOTIDE SEQUENCE [LARGE SCALE GENOMIC DNA]</scope>
    <source>
        <strain>ATCC 31267 / DSM 46492 / JCM 5070 / NBRC 14893 / NCIMB 12804 / NRRL 8165 / MA-4680</strain>
    </source>
</reference>
<reference key="2">
    <citation type="journal article" date="2003" name="Nat. Biotechnol.">
        <title>Complete genome sequence and comparative analysis of the industrial microorganism Streptomyces avermitilis.</title>
        <authorList>
            <person name="Ikeda H."/>
            <person name="Ishikawa J."/>
            <person name="Hanamoto A."/>
            <person name="Shinose M."/>
            <person name="Kikuchi H."/>
            <person name="Shiba T."/>
            <person name="Sakaki Y."/>
            <person name="Hattori M."/>
            <person name="Omura S."/>
        </authorList>
    </citation>
    <scope>NUCLEOTIDE SEQUENCE [LARGE SCALE GENOMIC DNA]</scope>
    <source>
        <strain>ATCC 31267 / DSM 46492 / JCM 5070 / NBRC 14893 / NCIMB 12804 / NRRL 8165 / MA-4680</strain>
    </source>
</reference>
<feature type="chain" id="PRO_0000139166" description="Methionine--tRNA ligase">
    <location>
        <begin position="1"/>
        <end position="574"/>
    </location>
</feature>
<feature type="short sequence motif" description="'HIGH' region">
    <location>
        <begin position="11"/>
        <end position="21"/>
    </location>
</feature>
<feature type="short sequence motif" description="'KMSKS' region">
    <location>
        <begin position="345"/>
        <end position="349"/>
    </location>
</feature>
<feature type="binding site" evidence="1">
    <location>
        <position position="143"/>
    </location>
    <ligand>
        <name>Zn(2+)</name>
        <dbReference type="ChEBI" id="CHEBI:29105"/>
    </ligand>
</feature>
<feature type="binding site" evidence="1">
    <location>
        <position position="146"/>
    </location>
    <ligand>
        <name>Zn(2+)</name>
        <dbReference type="ChEBI" id="CHEBI:29105"/>
    </ligand>
</feature>
<feature type="binding site" evidence="1">
    <location>
        <position position="156"/>
    </location>
    <ligand>
        <name>Zn(2+)</name>
        <dbReference type="ChEBI" id="CHEBI:29105"/>
    </ligand>
</feature>
<feature type="binding site" evidence="1">
    <location>
        <position position="159"/>
    </location>
    <ligand>
        <name>Zn(2+)</name>
        <dbReference type="ChEBI" id="CHEBI:29105"/>
    </ligand>
</feature>
<feature type="binding site" evidence="1">
    <location>
        <position position="348"/>
    </location>
    <ligand>
        <name>ATP</name>
        <dbReference type="ChEBI" id="CHEBI:30616"/>
    </ligand>
</feature>
<name>SYM_STRAW</name>
<protein>
    <recommendedName>
        <fullName evidence="1">Methionine--tRNA ligase</fullName>
        <ecNumber evidence="1">6.1.1.10</ecNumber>
    </recommendedName>
    <alternativeName>
        <fullName evidence="1">Methionyl-tRNA synthetase</fullName>
        <shortName evidence="1">MetRS</shortName>
    </alternativeName>
</protein>
<accession>Q82F60</accession>
<gene>
    <name evidence="1" type="primary">metG</name>
    <name type="ordered locus">SAV_4403</name>
</gene>
<comment type="function">
    <text evidence="1">Is required not only for elongation of protein synthesis but also for the initiation of all mRNA translation through initiator tRNA(fMet) aminoacylation.</text>
</comment>
<comment type="catalytic activity">
    <reaction evidence="1">
        <text>tRNA(Met) + L-methionine + ATP = L-methionyl-tRNA(Met) + AMP + diphosphate</text>
        <dbReference type="Rhea" id="RHEA:13481"/>
        <dbReference type="Rhea" id="RHEA-COMP:9667"/>
        <dbReference type="Rhea" id="RHEA-COMP:9698"/>
        <dbReference type="ChEBI" id="CHEBI:30616"/>
        <dbReference type="ChEBI" id="CHEBI:33019"/>
        <dbReference type="ChEBI" id="CHEBI:57844"/>
        <dbReference type="ChEBI" id="CHEBI:78442"/>
        <dbReference type="ChEBI" id="CHEBI:78530"/>
        <dbReference type="ChEBI" id="CHEBI:456215"/>
        <dbReference type="EC" id="6.1.1.10"/>
    </reaction>
</comment>
<comment type="cofactor">
    <cofactor evidence="1">
        <name>Zn(2+)</name>
        <dbReference type="ChEBI" id="CHEBI:29105"/>
    </cofactor>
    <text evidence="1">Binds 1 zinc ion per subunit.</text>
</comment>
<comment type="subunit">
    <text evidence="1">Monomer.</text>
</comment>
<comment type="subcellular location">
    <subcellularLocation>
        <location evidence="1">Cytoplasm</location>
    </subcellularLocation>
</comment>
<comment type="similarity">
    <text evidence="1">Belongs to the class-I aminoacyl-tRNA synthetase family. MetG type 1 subfamily.</text>
</comment>
<organism>
    <name type="scientific">Streptomyces avermitilis (strain ATCC 31267 / DSM 46492 / JCM 5070 / NBRC 14893 / NCIMB 12804 / NRRL 8165 / MA-4680)</name>
    <dbReference type="NCBI Taxonomy" id="227882"/>
    <lineage>
        <taxon>Bacteria</taxon>
        <taxon>Bacillati</taxon>
        <taxon>Actinomycetota</taxon>
        <taxon>Actinomycetes</taxon>
        <taxon>Kitasatosporales</taxon>
        <taxon>Streptomycetaceae</taxon>
        <taxon>Streptomyces</taxon>
    </lineage>
</organism>